<evidence type="ECO:0000250" key="1">
    <source>
        <dbReference type="UniProtKB" id="Q96DW6"/>
    </source>
</evidence>
<evidence type="ECO:0000255" key="2">
    <source>
        <dbReference type="HAMAP-Rule" id="MF_03064"/>
    </source>
</evidence>
<name>S2538_CANGA</name>
<protein>
    <recommendedName>
        <fullName evidence="2">Mitochondrial glycine transporter</fullName>
    </recommendedName>
    <alternativeName>
        <fullName evidence="2">Solute carrier family 25 member 38 homolog</fullName>
    </alternativeName>
</protein>
<sequence length="297" mass="32592">MASSTGHLIGGFAGGLSSAVALQPLDLLKTRFQQTKGGTLWQTVKSLDTPWQLWRGTLPSAIRTSVGSALYLSSLNLMRTALAKRKQFDTADSVVTGKSSNLPQLSMYENLVTGAFARGTVGYITMPITIIKVRYESTLYNYKSIAEAAKSIAAQEGIRGFFRGFGPTCLRDAPYSGLYVLLYEKLKHTLPTILPKSLLQLDSEGRYTAYTSTAINSTSAILSASMATTVTAPFDTIKTRMQLEPTKFKTFWSTLTTIVTQEHPIKIFSGLSMRLTRKALSAGIAWGIYEELIKHFM</sequence>
<dbReference type="EMBL" id="CR380954">
    <property type="protein sequence ID" value="CAG60189.1"/>
    <property type="molecule type" value="Genomic_DNA"/>
</dbReference>
<dbReference type="RefSeq" id="XP_447256.1">
    <property type="nucleotide sequence ID" value="XM_447256.1"/>
</dbReference>
<dbReference type="SMR" id="Q6FR88"/>
<dbReference type="FunCoup" id="Q6FR88">
    <property type="interactions" value="113"/>
</dbReference>
<dbReference type="STRING" id="284593.Q6FR88"/>
<dbReference type="EnsemblFungi" id="CAGL0H10538g-T">
    <property type="protein sequence ID" value="CAGL0H10538g-T-p1"/>
    <property type="gene ID" value="CAGL0H10538g"/>
</dbReference>
<dbReference type="KEGG" id="cgr:2888866"/>
<dbReference type="CGD" id="CAL0131438">
    <property type="gene designation" value="CAGL0H10538g"/>
</dbReference>
<dbReference type="VEuPathDB" id="FungiDB:CAGL0H10538g"/>
<dbReference type="eggNOG" id="KOG0766">
    <property type="taxonomic scope" value="Eukaryota"/>
</dbReference>
<dbReference type="HOGENOM" id="CLU_015166_0_3_1"/>
<dbReference type="InParanoid" id="Q6FR88"/>
<dbReference type="OMA" id="WGIYEEL"/>
<dbReference type="Proteomes" id="UP000002428">
    <property type="component" value="Chromosome H"/>
</dbReference>
<dbReference type="GO" id="GO:0005743">
    <property type="term" value="C:mitochondrial inner membrane"/>
    <property type="evidence" value="ECO:0007669"/>
    <property type="project" value="UniProtKB-SubCell"/>
</dbReference>
<dbReference type="GO" id="GO:0015187">
    <property type="term" value="F:glycine transmembrane transporter activity"/>
    <property type="evidence" value="ECO:0007669"/>
    <property type="project" value="UniProtKB-UniRule"/>
</dbReference>
<dbReference type="GO" id="GO:1904983">
    <property type="term" value="P:glycine import into mitochondrion"/>
    <property type="evidence" value="ECO:0007669"/>
    <property type="project" value="UniProtKB-UniRule"/>
</dbReference>
<dbReference type="GO" id="GO:0006783">
    <property type="term" value="P:heme biosynthetic process"/>
    <property type="evidence" value="ECO:0007669"/>
    <property type="project" value="EnsemblFungi"/>
</dbReference>
<dbReference type="FunFam" id="1.50.40.10:FF:000103">
    <property type="entry name" value="Mitochondrial glycine transporter"/>
    <property type="match status" value="1"/>
</dbReference>
<dbReference type="Gene3D" id="1.50.40.10">
    <property type="entry name" value="Mitochondrial carrier domain"/>
    <property type="match status" value="2"/>
</dbReference>
<dbReference type="HAMAP" id="MF_03064">
    <property type="entry name" value="SLC25A38"/>
    <property type="match status" value="1"/>
</dbReference>
<dbReference type="InterPro" id="IPR030847">
    <property type="entry name" value="Hem25/SLC25A38"/>
</dbReference>
<dbReference type="InterPro" id="IPR002067">
    <property type="entry name" value="Mit_carrier"/>
</dbReference>
<dbReference type="InterPro" id="IPR018108">
    <property type="entry name" value="Mitochondrial_sb/sol_carrier"/>
</dbReference>
<dbReference type="InterPro" id="IPR023395">
    <property type="entry name" value="Mt_carrier_dom_sf"/>
</dbReference>
<dbReference type="PANTHER" id="PTHR46181">
    <property type="entry name" value="MITOCHONDRIAL GLYCINE TRANSPORTER"/>
    <property type="match status" value="1"/>
</dbReference>
<dbReference type="PANTHER" id="PTHR46181:SF3">
    <property type="entry name" value="MITOCHONDRIAL GLYCINE TRANSPORTER"/>
    <property type="match status" value="1"/>
</dbReference>
<dbReference type="Pfam" id="PF00153">
    <property type="entry name" value="Mito_carr"/>
    <property type="match status" value="3"/>
</dbReference>
<dbReference type="PRINTS" id="PR00926">
    <property type="entry name" value="MITOCARRIER"/>
</dbReference>
<dbReference type="SUPFAM" id="SSF103506">
    <property type="entry name" value="Mitochondrial carrier"/>
    <property type="match status" value="1"/>
</dbReference>
<dbReference type="PROSITE" id="PS50920">
    <property type="entry name" value="SOLCAR"/>
    <property type="match status" value="3"/>
</dbReference>
<reference key="1">
    <citation type="journal article" date="2004" name="Nature">
        <title>Genome evolution in yeasts.</title>
        <authorList>
            <person name="Dujon B."/>
            <person name="Sherman D."/>
            <person name="Fischer G."/>
            <person name="Durrens P."/>
            <person name="Casaregola S."/>
            <person name="Lafontaine I."/>
            <person name="de Montigny J."/>
            <person name="Marck C."/>
            <person name="Neuveglise C."/>
            <person name="Talla E."/>
            <person name="Goffard N."/>
            <person name="Frangeul L."/>
            <person name="Aigle M."/>
            <person name="Anthouard V."/>
            <person name="Babour A."/>
            <person name="Barbe V."/>
            <person name="Barnay S."/>
            <person name="Blanchin S."/>
            <person name="Beckerich J.-M."/>
            <person name="Beyne E."/>
            <person name="Bleykasten C."/>
            <person name="Boisrame A."/>
            <person name="Boyer J."/>
            <person name="Cattolico L."/>
            <person name="Confanioleri F."/>
            <person name="de Daruvar A."/>
            <person name="Despons L."/>
            <person name="Fabre E."/>
            <person name="Fairhead C."/>
            <person name="Ferry-Dumazet H."/>
            <person name="Groppi A."/>
            <person name="Hantraye F."/>
            <person name="Hennequin C."/>
            <person name="Jauniaux N."/>
            <person name="Joyet P."/>
            <person name="Kachouri R."/>
            <person name="Kerrest A."/>
            <person name="Koszul R."/>
            <person name="Lemaire M."/>
            <person name="Lesur I."/>
            <person name="Ma L."/>
            <person name="Muller H."/>
            <person name="Nicaud J.-M."/>
            <person name="Nikolski M."/>
            <person name="Oztas S."/>
            <person name="Ozier-Kalogeropoulos O."/>
            <person name="Pellenz S."/>
            <person name="Potier S."/>
            <person name="Richard G.-F."/>
            <person name="Straub M.-L."/>
            <person name="Suleau A."/>
            <person name="Swennen D."/>
            <person name="Tekaia F."/>
            <person name="Wesolowski-Louvel M."/>
            <person name="Westhof E."/>
            <person name="Wirth B."/>
            <person name="Zeniou-Meyer M."/>
            <person name="Zivanovic Y."/>
            <person name="Bolotin-Fukuhara M."/>
            <person name="Thierry A."/>
            <person name="Bouchier C."/>
            <person name="Caudron B."/>
            <person name="Scarpelli C."/>
            <person name="Gaillardin C."/>
            <person name="Weissenbach J."/>
            <person name="Wincker P."/>
            <person name="Souciet J.-L."/>
        </authorList>
    </citation>
    <scope>NUCLEOTIDE SEQUENCE [LARGE SCALE GENOMIC DNA]</scope>
    <source>
        <strain>ATCC 2001 / BCRC 20586 / JCM 3761 / NBRC 0622 / NRRL Y-65 / CBS 138</strain>
    </source>
</reference>
<organism>
    <name type="scientific">Candida glabrata (strain ATCC 2001 / BCRC 20586 / JCM 3761 / NBRC 0622 / NRRL Y-65 / CBS 138)</name>
    <name type="common">Yeast</name>
    <name type="synonym">Nakaseomyces glabratus</name>
    <dbReference type="NCBI Taxonomy" id="284593"/>
    <lineage>
        <taxon>Eukaryota</taxon>
        <taxon>Fungi</taxon>
        <taxon>Dikarya</taxon>
        <taxon>Ascomycota</taxon>
        <taxon>Saccharomycotina</taxon>
        <taxon>Saccharomycetes</taxon>
        <taxon>Saccharomycetales</taxon>
        <taxon>Saccharomycetaceae</taxon>
        <taxon>Nakaseomyces</taxon>
    </lineage>
</organism>
<feature type="chain" id="PRO_0000378932" description="Mitochondrial glycine transporter">
    <location>
        <begin position="1"/>
        <end position="297"/>
    </location>
</feature>
<feature type="transmembrane region" description="Helical; Name=1" evidence="2">
    <location>
        <begin position="8"/>
        <end position="33"/>
    </location>
</feature>
<feature type="transmembrane region" description="Helical; Name=2" evidence="2">
    <location>
        <begin position="56"/>
        <end position="82"/>
    </location>
</feature>
<feature type="transmembrane region" description="Helical; Name=3" evidence="2">
    <location>
        <begin position="111"/>
        <end position="136"/>
    </location>
</feature>
<feature type="transmembrane region" description="Helical; Name=4" evidence="2">
    <location>
        <begin position="164"/>
        <end position="187"/>
    </location>
</feature>
<feature type="transmembrane region" description="Helical; Name=5" evidence="2">
    <location>
        <begin position="215"/>
        <end position="241"/>
    </location>
</feature>
<feature type="transmembrane region" description="Helical; Name=6" evidence="2">
    <location>
        <begin position="270"/>
        <end position="288"/>
    </location>
</feature>
<feature type="repeat" description="Solcar 1" evidence="2">
    <location>
        <begin position="5"/>
        <end position="81"/>
    </location>
</feature>
<feature type="repeat" description="Solcar 2" evidence="2">
    <location>
        <begin position="105"/>
        <end position="189"/>
    </location>
</feature>
<feature type="repeat" description="Solcar 3" evidence="2">
    <location>
        <begin position="211"/>
        <end position="295"/>
    </location>
</feature>
<gene>
    <name type="ordered locus">CAGL0H10538g</name>
</gene>
<keyword id="KW-0472">Membrane</keyword>
<keyword id="KW-0496">Mitochondrion</keyword>
<keyword id="KW-0999">Mitochondrion inner membrane</keyword>
<keyword id="KW-1185">Reference proteome</keyword>
<keyword id="KW-0677">Repeat</keyword>
<keyword id="KW-0812">Transmembrane</keyword>
<keyword id="KW-1133">Transmembrane helix</keyword>
<keyword id="KW-0813">Transport</keyword>
<accession>Q6FR88</accession>
<comment type="function">
    <text evidence="2">Mitochondrial glycine transporter that imports glycine into the mitochondrial matrix. Plays an important role in providing glycine for the first enzymatic step in heme biosynthesis, the condensation of glycine with succinyl-CoA to produce 5-aminolevulinate (ALA) in the mitochondrial matrix.</text>
</comment>
<comment type="catalytic activity">
    <reaction evidence="1">
        <text>glycine(in) = glycine(out)</text>
        <dbReference type="Rhea" id="RHEA:70715"/>
        <dbReference type="ChEBI" id="CHEBI:57305"/>
    </reaction>
</comment>
<comment type="subcellular location">
    <subcellularLocation>
        <location evidence="2">Mitochondrion inner membrane</location>
        <topology evidence="2">Multi-pass membrane protein</topology>
    </subcellularLocation>
</comment>
<comment type="similarity">
    <text evidence="2">Belongs to the mitochondrial carrier (TC 2.A.29) family. SLC25A38 subfamily.</text>
</comment>
<proteinExistence type="inferred from homology"/>